<proteinExistence type="inferred from homology"/>
<name>MATK_BETPA</name>
<organism>
    <name type="scientific">Betula papyrifera</name>
    <name type="common">Paper birch</name>
    <dbReference type="NCBI Taxonomy" id="3507"/>
    <lineage>
        <taxon>Eukaryota</taxon>
        <taxon>Viridiplantae</taxon>
        <taxon>Streptophyta</taxon>
        <taxon>Embryophyta</taxon>
        <taxon>Tracheophyta</taxon>
        <taxon>Spermatophyta</taxon>
        <taxon>Magnoliopsida</taxon>
        <taxon>eudicotyledons</taxon>
        <taxon>Gunneridae</taxon>
        <taxon>Pentapetalae</taxon>
        <taxon>rosids</taxon>
        <taxon>fabids</taxon>
        <taxon>Fagales</taxon>
        <taxon>Betulaceae</taxon>
        <taxon>Betula</taxon>
    </lineage>
</organism>
<feature type="chain" id="PRO_0000143284" description="Maturase K">
    <location>
        <begin position="1"/>
        <end position="504"/>
    </location>
</feature>
<protein>
    <recommendedName>
        <fullName evidence="1">Maturase K</fullName>
    </recommendedName>
    <alternativeName>
        <fullName evidence="1">Intron maturase</fullName>
    </alternativeName>
</protein>
<geneLocation type="chloroplast"/>
<gene>
    <name evidence="1" type="primary">matK</name>
</gene>
<dbReference type="EMBL" id="AY372022">
    <property type="protein sequence ID" value="AAR23283.1"/>
    <property type="molecule type" value="Genomic_DNA"/>
</dbReference>
<dbReference type="GO" id="GO:0009507">
    <property type="term" value="C:chloroplast"/>
    <property type="evidence" value="ECO:0007669"/>
    <property type="project" value="UniProtKB-SubCell"/>
</dbReference>
<dbReference type="GO" id="GO:0003723">
    <property type="term" value="F:RNA binding"/>
    <property type="evidence" value="ECO:0007669"/>
    <property type="project" value="UniProtKB-KW"/>
</dbReference>
<dbReference type="GO" id="GO:0006397">
    <property type="term" value="P:mRNA processing"/>
    <property type="evidence" value="ECO:0007669"/>
    <property type="project" value="UniProtKB-KW"/>
</dbReference>
<dbReference type="GO" id="GO:0008380">
    <property type="term" value="P:RNA splicing"/>
    <property type="evidence" value="ECO:0007669"/>
    <property type="project" value="UniProtKB-UniRule"/>
</dbReference>
<dbReference type="GO" id="GO:0008033">
    <property type="term" value="P:tRNA processing"/>
    <property type="evidence" value="ECO:0007669"/>
    <property type="project" value="UniProtKB-KW"/>
</dbReference>
<dbReference type="HAMAP" id="MF_01390">
    <property type="entry name" value="MatK"/>
    <property type="match status" value="1"/>
</dbReference>
<dbReference type="InterPro" id="IPR024937">
    <property type="entry name" value="Domain_X"/>
</dbReference>
<dbReference type="InterPro" id="IPR002866">
    <property type="entry name" value="Maturase_MatK"/>
</dbReference>
<dbReference type="InterPro" id="IPR024942">
    <property type="entry name" value="Maturase_MatK_N"/>
</dbReference>
<dbReference type="PANTHER" id="PTHR34811">
    <property type="entry name" value="MATURASE K"/>
    <property type="match status" value="1"/>
</dbReference>
<dbReference type="PANTHER" id="PTHR34811:SF1">
    <property type="entry name" value="MATURASE K"/>
    <property type="match status" value="1"/>
</dbReference>
<dbReference type="Pfam" id="PF01348">
    <property type="entry name" value="Intron_maturas2"/>
    <property type="match status" value="1"/>
</dbReference>
<dbReference type="Pfam" id="PF01824">
    <property type="entry name" value="MatK_N"/>
    <property type="match status" value="1"/>
</dbReference>
<comment type="function">
    <text evidence="1">Usually encoded in the trnK tRNA gene intron. Probably assists in splicing its own and other chloroplast group II introns.</text>
</comment>
<comment type="subcellular location">
    <subcellularLocation>
        <location>Plastid</location>
        <location>Chloroplast</location>
    </subcellularLocation>
</comment>
<comment type="similarity">
    <text evidence="1">Belongs to the intron maturase 2 family. MatK subfamily.</text>
</comment>
<sequence>MEEFQGYLELDRFRQHDFLYPLIFREYIYALAHDHGLNRVILLENVTYDNKSSLLIVKRLITRMYQQNHLMISANDSNQNKFLGYNKNLYSQIISEGFAIIAEIPFSLRLIFSLEGSQIVRSYNLRSIHSIFPFLEDKFPHLNYVADVLIPYPIHLEILVQTLRYRVKDASSLHLLRFFLHEYSNGNILIILNKSISIFSKSNSRLLLFLYNSYICEYESVFLFLRNQSNHLRLTSSGVLFERIYLHRKMEDLVEVFVNDFQGILCFLKDPFIHYVRYQGKSILASKDTPLLMNKWKYYLVSLWQCHFFVWSRPGRIYINQLSKHSLDFLGYFSSVPLNPSMVRSQMLENSFIINNAPKKLDTIVTIIPLIGSLAKAKFCNALGHPISKPTWADLSDFDIINRFVRICKNLSHYYSGSSKKKGMYRIKYILRLSCVKTLARKHKSTIRAFLKRLGSELFEEFFTEEEEFLSLIFPRTSFTLRRLYRGRVWYLDIICMNGLANHE</sequence>
<evidence type="ECO:0000255" key="1">
    <source>
        <dbReference type="HAMAP-Rule" id="MF_01390"/>
    </source>
</evidence>
<accession>Q67BD8</accession>
<keyword id="KW-0150">Chloroplast</keyword>
<keyword id="KW-0507">mRNA processing</keyword>
<keyword id="KW-0934">Plastid</keyword>
<keyword id="KW-0694">RNA-binding</keyword>
<keyword id="KW-0819">tRNA processing</keyword>
<reference key="1">
    <citation type="journal article" date="2004" name="Am. J. Bot.">
        <title>Phylogenetic relationships of Betula species (Betulaceae) based on nuclear ADH and chloroplast matK sequences.</title>
        <authorList>
            <person name="Jarvinen P."/>
            <person name="Palme A."/>
            <person name="Morales Suarez L.O."/>
            <person name="Lannenpaa M."/>
            <person name="Sopanen T."/>
            <person name="Lascoux M."/>
        </authorList>
        <dbReference type="AGRICOLA" id="IND43661287"/>
    </citation>
    <scope>NUCLEOTIDE SEQUENCE [GENOMIC DNA]</scope>
</reference>